<gene>
    <name evidence="1 3" type="primary">metXA</name>
    <name evidence="4" type="ordered locus">Mzhil_0824</name>
</gene>
<dbReference type="EC" id="2.3.1.31" evidence="1 2"/>
<dbReference type="EMBL" id="CP002101">
    <property type="protein sequence ID" value="AEH60686.1"/>
    <property type="molecule type" value="Genomic_DNA"/>
</dbReference>
<dbReference type="RefSeq" id="WP_013898125.1">
    <property type="nucleotide sequence ID" value="NC_015676.1"/>
</dbReference>
<dbReference type="SMR" id="F7XKY8"/>
<dbReference type="STRING" id="679901.Mzhil_0824"/>
<dbReference type="ESTHER" id="metzd-metxa">
    <property type="family name" value="Homoserine_transacetylase"/>
</dbReference>
<dbReference type="GeneID" id="10822445"/>
<dbReference type="KEGG" id="mzh:Mzhil_0824"/>
<dbReference type="HOGENOM" id="CLU_028760_1_1_2"/>
<dbReference type="OrthoDB" id="295172at2157"/>
<dbReference type="UniPathway" id="UPA00051">
    <property type="reaction ID" value="UER00074"/>
</dbReference>
<dbReference type="Proteomes" id="UP000006622">
    <property type="component" value="Chromosome"/>
</dbReference>
<dbReference type="GO" id="GO:0005737">
    <property type="term" value="C:cytoplasm"/>
    <property type="evidence" value="ECO:0007669"/>
    <property type="project" value="UniProtKB-SubCell"/>
</dbReference>
<dbReference type="GO" id="GO:0004414">
    <property type="term" value="F:homoserine O-acetyltransferase activity"/>
    <property type="evidence" value="ECO:0007669"/>
    <property type="project" value="UniProtKB-UniRule"/>
</dbReference>
<dbReference type="GO" id="GO:0009092">
    <property type="term" value="P:homoserine metabolic process"/>
    <property type="evidence" value="ECO:0007669"/>
    <property type="project" value="TreeGrafter"/>
</dbReference>
<dbReference type="GO" id="GO:0009086">
    <property type="term" value="P:methionine biosynthetic process"/>
    <property type="evidence" value="ECO:0007669"/>
    <property type="project" value="UniProtKB-UniRule"/>
</dbReference>
<dbReference type="CDD" id="cd04605">
    <property type="entry name" value="CBS_pair_arch_MET2_assoc"/>
    <property type="match status" value="1"/>
</dbReference>
<dbReference type="FunFam" id="1.10.1740.110:FF:000001">
    <property type="entry name" value="Homoserine O-acetyltransferase"/>
    <property type="match status" value="1"/>
</dbReference>
<dbReference type="Gene3D" id="1.10.1740.110">
    <property type="match status" value="1"/>
</dbReference>
<dbReference type="Gene3D" id="3.40.50.1820">
    <property type="entry name" value="alpha/beta hydrolase"/>
    <property type="match status" value="1"/>
</dbReference>
<dbReference type="Gene3D" id="3.10.580.10">
    <property type="entry name" value="CBS-domain"/>
    <property type="match status" value="1"/>
</dbReference>
<dbReference type="HAMAP" id="MF_00296">
    <property type="entry name" value="MetX_acyltransf"/>
    <property type="match status" value="1"/>
</dbReference>
<dbReference type="InterPro" id="IPR000073">
    <property type="entry name" value="AB_hydrolase_1"/>
</dbReference>
<dbReference type="InterPro" id="IPR029058">
    <property type="entry name" value="AB_hydrolase_fold"/>
</dbReference>
<dbReference type="InterPro" id="IPR000644">
    <property type="entry name" value="CBS_dom"/>
</dbReference>
<dbReference type="InterPro" id="IPR046342">
    <property type="entry name" value="CBS_dom_sf"/>
</dbReference>
<dbReference type="InterPro" id="IPR008220">
    <property type="entry name" value="HAT_MetX-like"/>
</dbReference>
<dbReference type="NCBIfam" id="TIGR01392">
    <property type="entry name" value="homoserO_Ac_trn"/>
    <property type="match status" value="1"/>
</dbReference>
<dbReference type="NCBIfam" id="NF001209">
    <property type="entry name" value="PRK00175.1"/>
    <property type="match status" value="1"/>
</dbReference>
<dbReference type="PANTHER" id="PTHR32268">
    <property type="entry name" value="HOMOSERINE O-ACETYLTRANSFERASE"/>
    <property type="match status" value="1"/>
</dbReference>
<dbReference type="PANTHER" id="PTHR32268:SF11">
    <property type="entry name" value="HOMOSERINE O-ACETYLTRANSFERASE"/>
    <property type="match status" value="1"/>
</dbReference>
<dbReference type="Pfam" id="PF00561">
    <property type="entry name" value="Abhydrolase_1"/>
    <property type="match status" value="1"/>
</dbReference>
<dbReference type="Pfam" id="PF00571">
    <property type="entry name" value="CBS"/>
    <property type="match status" value="2"/>
</dbReference>
<dbReference type="SMART" id="SM00116">
    <property type="entry name" value="CBS"/>
    <property type="match status" value="2"/>
</dbReference>
<dbReference type="SUPFAM" id="SSF53474">
    <property type="entry name" value="alpha/beta-Hydrolases"/>
    <property type="match status" value="1"/>
</dbReference>
<dbReference type="SUPFAM" id="SSF54631">
    <property type="entry name" value="CBS-domain pair"/>
    <property type="match status" value="1"/>
</dbReference>
<dbReference type="PROSITE" id="PS51371">
    <property type="entry name" value="CBS"/>
    <property type="match status" value="2"/>
</dbReference>
<name>METXA_METZD</name>
<sequence length="492" mass="54927">MKKGSLGIVETKYYHLEEELKLESGRKISDVTIAYEAYGTLNRDKNNVILVCHALTGDAHAAGWHKGDNKPGWWDILIGPGKCLDTDKYFIVCSNVIGGCRGSTGPSSIDPETGKPYGLSFPVITIKDMVNAQKKLLDHLGISSIYAVIGGSMGGLQVLQWSVSYPDYINKAIALAASAYSSPQQIAFNEVARIAIISDPEWNKGNYYYSRQPSHGLALARMIGHITYLSDESMREKFGRELQDRDRYNYDLSMDFQVESYLHYKGRSFTERFDANSYLYITKAVDYFDLTENGSLIDGLKDIKAKCLIIAVTSDWLYPPYQSKDIVMALNANNVDVTYREIESNYGHDAFLLEAGQLNYVIGGFLNNITVSDIMKLDVVTVQEDISIEDAAQIMFDNGITHLPVVSDDEQIRGIITSWDISKAVALKFTTLDRILTKNVITSRPDEGIEKCARKMQNNNISALPVIDENRKVIGIIGSDEINKMIGNHRCT</sequence>
<protein>
    <recommendedName>
        <fullName evidence="1">Homoserine O-acetyltransferase</fullName>
        <shortName evidence="1 3">HAT</shortName>
        <ecNumber evidence="1 2">2.3.1.31</ecNumber>
    </recommendedName>
    <alternativeName>
        <fullName evidence="1">Homoserine transacetylase</fullName>
        <shortName evidence="1">HTA</shortName>
    </alternativeName>
</protein>
<proteinExistence type="evidence at protein level"/>
<reference key="1">
    <citation type="submission" date="2010-07" db="EMBL/GenBank/DDBJ databases">
        <title>The complete genome of Methanosalsum zhilinae DSM 4017.</title>
        <authorList>
            <person name="Lucas S."/>
            <person name="Copeland A."/>
            <person name="Lapidus A."/>
            <person name="Glavina del Rio T."/>
            <person name="Dalin E."/>
            <person name="Tice H."/>
            <person name="Bruce D."/>
            <person name="Goodwin L."/>
            <person name="Pitluck S."/>
            <person name="Kyrpides N."/>
            <person name="Mavromatis K."/>
            <person name="Ovchinnikova G."/>
            <person name="Daligault H."/>
            <person name="Detter J.C."/>
            <person name="Han C."/>
            <person name="Tapia R."/>
            <person name="Larimer F."/>
            <person name="Land M."/>
            <person name="Hauser L."/>
            <person name="Markowitz V."/>
            <person name="Cheng J.-F."/>
            <person name="Hugenholtz P."/>
            <person name="Woyke T."/>
            <person name="Wu D."/>
            <person name="Spring S."/>
            <person name="Schueler E."/>
            <person name="Brambilla E."/>
            <person name="Klenk H.-P."/>
            <person name="Eisen J.A."/>
        </authorList>
    </citation>
    <scope>NUCLEOTIDE SEQUENCE [LARGE SCALE GENOMIC DNA]</scope>
    <source>
        <strain>DSM 4017 / NBRC 107636 / OCM 62 / WeN5</strain>
    </source>
</reference>
<reference key="2">
    <citation type="journal article" date="2017" name="Nat. Chem. Biol.">
        <title>Parallel evolution of non-homologous isofunctional enzymes in methionine biosynthesis.</title>
        <authorList>
            <person name="Bastard K."/>
            <person name="Perret A."/>
            <person name="Mariage A."/>
            <person name="Bessonnet T."/>
            <person name="Pinet-Turpault A."/>
            <person name="Petit J.L."/>
            <person name="Darii E."/>
            <person name="Bazire P."/>
            <person name="Vergne-Vaxelaire C."/>
            <person name="Brewee C."/>
            <person name="Debard A."/>
            <person name="Pellouin V."/>
            <person name="Besnard-Gonnet M."/>
            <person name="Artiguenave F."/>
            <person name="Medigue C."/>
            <person name="Vallenet D."/>
            <person name="Danchin A."/>
            <person name="Zaparucha A."/>
            <person name="Weissenbach J."/>
            <person name="Salanoubat M."/>
            <person name="de Berardinis V."/>
        </authorList>
    </citation>
    <scope>FUNCTION</scope>
    <scope>CATALYTIC ACTIVITY</scope>
</reference>
<evidence type="ECO:0000255" key="1">
    <source>
        <dbReference type="HAMAP-Rule" id="MF_00296"/>
    </source>
</evidence>
<evidence type="ECO:0000269" key="2">
    <source>
    </source>
</evidence>
<evidence type="ECO:0000303" key="3">
    <source>
    </source>
</evidence>
<evidence type="ECO:0000312" key="4">
    <source>
        <dbReference type="EMBL" id="AEH60686.1"/>
    </source>
</evidence>
<keyword id="KW-0012">Acyltransferase</keyword>
<keyword id="KW-0028">Amino-acid biosynthesis</keyword>
<keyword id="KW-0129">CBS domain</keyword>
<keyword id="KW-0963">Cytoplasm</keyword>
<keyword id="KW-0486">Methionine biosynthesis</keyword>
<keyword id="KW-1185">Reference proteome</keyword>
<keyword id="KW-0677">Repeat</keyword>
<keyword id="KW-0808">Transferase</keyword>
<feature type="chain" id="PRO_0000440295" description="Homoserine O-acetyltransferase">
    <location>
        <begin position="1"/>
        <end position="492"/>
    </location>
</feature>
<feature type="domain" description="AB hydrolase-1" evidence="1">
    <location>
        <begin position="47"/>
        <end position="354"/>
    </location>
</feature>
<feature type="domain" description="CBS 1" evidence="1">
    <location>
        <begin position="375"/>
        <end position="432"/>
    </location>
</feature>
<feature type="domain" description="CBS 2" evidence="1">
    <location>
        <begin position="436"/>
        <end position="492"/>
    </location>
</feature>
<feature type="active site" description="Nucleophile" evidence="1">
    <location>
        <position position="152"/>
    </location>
</feature>
<feature type="active site" evidence="1">
    <location>
        <position position="315"/>
    </location>
</feature>
<feature type="active site" evidence="1">
    <location>
        <position position="348"/>
    </location>
</feature>
<feature type="binding site" evidence="1">
    <location>
        <position position="221"/>
    </location>
    <ligand>
        <name>substrate</name>
    </ligand>
</feature>
<feature type="binding site" evidence="1">
    <location>
        <position position="349"/>
    </location>
    <ligand>
        <name>substrate</name>
    </ligand>
</feature>
<accession>F7XKY8</accession>
<organism>
    <name type="scientific">Methanosalsum zhilinae (strain DSM 4017 / NBRC 107636 / OCM 62 / WeN5)</name>
    <name type="common">Methanohalophilus zhilinae</name>
    <dbReference type="NCBI Taxonomy" id="679901"/>
    <lineage>
        <taxon>Archaea</taxon>
        <taxon>Methanobacteriati</taxon>
        <taxon>Methanobacteriota</taxon>
        <taxon>Stenosarchaea group</taxon>
        <taxon>Methanomicrobia</taxon>
        <taxon>Methanosarcinales</taxon>
        <taxon>Methanosarcinaceae</taxon>
        <taxon>Methanosalsum</taxon>
    </lineage>
</organism>
<comment type="function">
    <text evidence="1 2">Transfers an acetyl group from acetyl-CoA to L-homoserine, forming acetyl-L-homoserine.</text>
</comment>
<comment type="catalytic activity">
    <reaction evidence="1 2">
        <text>L-homoserine + acetyl-CoA = O-acetyl-L-homoserine + CoA</text>
        <dbReference type="Rhea" id="RHEA:13701"/>
        <dbReference type="ChEBI" id="CHEBI:57287"/>
        <dbReference type="ChEBI" id="CHEBI:57288"/>
        <dbReference type="ChEBI" id="CHEBI:57476"/>
        <dbReference type="ChEBI" id="CHEBI:57716"/>
        <dbReference type="EC" id="2.3.1.31"/>
    </reaction>
</comment>
<comment type="pathway">
    <text evidence="1">Amino-acid biosynthesis; L-methionine biosynthesis via de novo pathway; O-acetyl-L-homoserine from L-homoserine: step 1/1.</text>
</comment>
<comment type="subunit">
    <text evidence="1">Homodimer.</text>
</comment>
<comment type="subcellular location">
    <subcellularLocation>
        <location evidence="1">Cytoplasm</location>
    </subcellularLocation>
</comment>
<comment type="similarity">
    <text evidence="1">Belongs to the AB hydrolase superfamily. MetX family.</text>
</comment>